<name>NRDR_ALIFM</name>
<accession>B5FBF4</accession>
<sequence>MHCPFCSATDTKVIDSRLVSDGHQVRRRRQCLACSERFTTFESAELVMPKVIKSNGNREPFDEDKLSGGLYRSLEKRPVSADLVELALNTIKSQLRATGEREVPSDMIGNLVMDQLKELDKVAYIRFASVYRSFEDIKEFGEEIAKLEK</sequence>
<keyword id="KW-0067">ATP-binding</keyword>
<keyword id="KW-0238">DNA-binding</keyword>
<keyword id="KW-0479">Metal-binding</keyword>
<keyword id="KW-0547">Nucleotide-binding</keyword>
<keyword id="KW-0678">Repressor</keyword>
<keyword id="KW-0804">Transcription</keyword>
<keyword id="KW-0805">Transcription regulation</keyword>
<keyword id="KW-0862">Zinc</keyword>
<keyword id="KW-0863">Zinc-finger</keyword>
<protein>
    <recommendedName>
        <fullName evidence="1">Transcriptional repressor NrdR</fullName>
    </recommendedName>
</protein>
<proteinExistence type="inferred from homology"/>
<organism>
    <name type="scientific">Aliivibrio fischeri (strain MJ11)</name>
    <name type="common">Vibrio fischeri</name>
    <dbReference type="NCBI Taxonomy" id="388396"/>
    <lineage>
        <taxon>Bacteria</taxon>
        <taxon>Pseudomonadati</taxon>
        <taxon>Pseudomonadota</taxon>
        <taxon>Gammaproteobacteria</taxon>
        <taxon>Vibrionales</taxon>
        <taxon>Vibrionaceae</taxon>
        <taxon>Aliivibrio</taxon>
    </lineage>
</organism>
<evidence type="ECO:0000255" key="1">
    <source>
        <dbReference type="HAMAP-Rule" id="MF_00440"/>
    </source>
</evidence>
<dbReference type="EMBL" id="CP001139">
    <property type="protein sequence ID" value="ACH66845.1"/>
    <property type="molecule type" value="Genomic_DNA"/>
</dbReference>
<dbReference type="RefSeq" id="WP_005418088.1">
    <property type="nucleotide sequence ID" value="NC_011184.1"/>
</dbReference>
<dbReference type="SMR" id="B5FBF4"/>
<dbReference type="GeneID" id="54163354"/>
<dbReference type="KEGG" id="vfm:VFMJ11_0719"/>
<dbReference type="HOGENOM" id="CLU_108412_0_0_6"/>
<dbReference type="Proteomes" id="UP000001857">
    <property type="component" value="Chromosome I"/>
</dbReference>
<dbReference type="GO" id="GO:0005524">
    <property type="term" value="F:ATP binding"/>
    <property type="evidence" value="ECO:0007669"/>
    <property type="project" value="UniProtKB-KW"/>
</dbReference>
<dbReference type="GO" id="GO:0003677">
    <property type="term" value="F:DNA binding"/>
    <property type="evidence" value="ECO:0007669"/>
    <property type="project" value="UniProtKB-KW"/>
</dbReference>
<dbReference type="GO" id="GO:0008270">
    <property type="term" value="F:zinc ion binding"/>
    <property type="evidence" value="ECO:0007669"/>
    <property type="project" value="UniProtKB-UniRule"/>
</dbReference>
<dbReference type="GO" id="GO:0045892">
    <property type="term" value="P:negative regulation of DNA-templated transcription"/>
    <property type="evidence" value="ECO:0007669"/>
    <property type="project" value="UniProtKB-UniRule"/>
</dbReference>
<dbReference type="HAMAP" id="MF_00440">
    <property type="entry name" value="NrdR"/>
    <property type="match status" value="1"/>
</dbReference>
<dbReference type="InterPro" id="IPR005144">
    <property type="entry name" value="ATP-cone_dom"/>
</dbReference>
<dbReference type="InterPro" id="IPR055173">
    <property type="entry name" value="NrdR-like_N"/>
</dbReference>
<dbReference type="InterPro" id="IPR003796">
    <property type="entry name" value="RNR_NrdR-like"/>
</dbReference>
<dbReference type="NCBIfam" id="TIGR00244">
    <property type="entry name" value="transcriptional regulator NrdR"/>
    <property type="match status" value="1"/>
</dbReference>
<dbReference type="PANTHER" id="PTHR30455">
    <property type="entry name" value="TRANSCRIPTIONAL REPRESSOR NRDR"/>
    <property type="match status" value="1"/>
</dbReference>
<dbReference type="PANTHER" id="PTHR30455:SF2">
    <property type="entry name" value="TRANSCRIPTIONAL REPRESSOR NRDR"/>
    <property type="match status" value="1"/>
</dbReference>
<dbReference type="Pfam" id="PF03477">
    <property type="entry name" value="ATP-cone"/>
    <property type="match status" value="1"/>
</dbReference>
<dbReference type="Pfam" id="PF22811">
    <property type="entry name" value="Zn_ribbon_NrdR"/>
    <property type="match status" value="1"/>
</dbReference>
<dbReference type="PROSITE" id="PS51161">
    <property type="entry name" value="ATP_CONE"/>
    <property type="match status" value="1"/>
</dbReference>
<feature type="chain" id="PRO_1000124563" description="Transcriptional repressor NrdR">
    <location>
        <begin position="1"/>
        <end position="149"/>
    </location>
</feature>
<feature type="domain" description="ATP-cone" evidence="1">
    <location>
        <begin position="49"/>
        <end position="139"/>
    </location>
</feature>
<feature type="zinc finger region" evidence="1">
    <location>
        <begin position="3"/>
        <end position="34"/>
    </location>
</feature>
<gene>
    <name evidence="1" type="primary">nrdR</name>
    <name type="ordered locus">VFMJ11_0719</name>
</gene>
<reference key="1">
    <citation type="submission" date="2008-08" db="EMBL/GenBank/DDBJ databases">
        <title>Complete sequence of Vibrio fischeri strain MJ11.</title>
        <authorList>
            <person name="Mandel M.J."/>
            <person name="Stabb E.V."/>
            <person name="Ruby E.G."/>
            <person name="Ferriera S."/>
            <person name="Johnson J."/>
            <person name="Kravitz S."/>
            <person name="Beeson K."/>
            <person name="Sutton G."/>
            <person name="Rogers Y.-H."/>
            <person name="Friedman R."/>
            <person name="Frazier M."/>
            <person name="Venter J.C."/>
        </authorList>
    </citation>
    <scope>NUCLEOTIDE SEQUENCE [LARGE SCALE GENOMIC DNA]</scope>
    <source>
        <strain>MJ11</strain>
    </source>
</reference>
<comment type="function">
    <text evidence="1">Negatively regulates transcription of bacterial ribonucleotide reductase nrd genes and operons by binding to NrdR-boxes.</text>
</comment>
<comment type="cofactor">
    <cofactor evidence="1">
        <name>Zn(2+)</name>
        <dbReference type="ChEBI" id="CHEBI:29105"/>
    </cofactor>
    <text evidence="1">Binds 1 zinc ion.</text>
</comment>
<comment type="similarity">
    <text evidence="1">Belongs to the NrdR family.</text>
</comment>